<dbReference type="EMBL" id="U46854">
    <property type="protein sequence ID" value="AAC52508.1"/>
    <property type="molecule type" value="mRNA"/>
</dbReference>
<dbReference type="EMBL" id="BC103612">
    <property type="protein sequence ID" value="AAI03613.1"/>
    <property type="molecule type" value="mRNA"/>
</dbReference>
<dbReference type="EMBL" id="BC105644">
    <property type="protein sequence ID" value="AAI05645.1"/>
    <property type="molecule type" value="mRNA"/>
</dbReference>
<dbReference type="EMBL" id="BC105645">
    <property type="protein sequence ID" value="AAI05646.1"/>
    <property type="molecule type" value="mRNA"/>
</dbReference>
<dbReference type="RefSeq" id="NP_033193.2">
    <property type="nucleotide sequence ID" value="NM_009167.3"/>
</dbReference>
<dbReference type="SMR" id="Q61120"/>
<dbReference type="BioGRID" id="203216">
    <property type="interactions" value="9"/>
</dbReference>
<dbReference type="FunCoup" id="Q61120">
    <property type="interactions" value="1563"/>
</dbReference>
<dbReference type="IntAct" id="Q61120">
    <property type="interactions" value="1"/>
</dbReference>
<dbReference type="MINT" id="Q61120"/>
<dbReference type="STRING" id="10090.ENSMUSP00000021898"/>
<dbReference type="iPTMnet" id="Q61120"/>
<dbReference type="PhosphoSitePlus" id="Q61120"/>
<dbReference type="jPOST" id="Q61120"/>
<dbReference type="PaxDb" id="10090-ENSMUSP00000021898"/>
<dbReference type="PeptideAtlas" id="Q61120"/>
<dbReference type="ProteomicsDB" id="255404"/>
<dbReference type="Antibodypedia" id="27964">
    <property type="antibodies" value="227 antibodies from 29 providers"/>
</dbReference>
<dbReference type="DNASU" id="20418"/>
<dbReference type="Ensembl" id="ENSMUST00000021898.6">
    <property type="protein sequence ID" value="ENSMUSP00000021898.6"/>
    <property type="gene ID" value="ENSMUSG00000021448.9"/>
</dbReference>
<dbReference type="GeneID" id="20418"/>
<dbReference type="KEGG" id="mmu:20418"/>
<dbReference type="UCSC" id="uc007qmg.1">
    <property type="organism name" value="mouse"/>
</dbReference>
<dbReference type="AGR" id="MGI:106179"/>
<dbReference type="CTD" id="53358"/>
<dbReference type="MGI" id="MGI:106179">
    <property type="gene designation" value="Shc3"/>
</dbReference>
<dbReference type="VEuPathDB" id="HostDB:ENSMUSG00000021448"/>
<dbReference type="eggNOG" id="KOG3697">
    <property type="taxonomic scope" value="Eukaryota"/>
</dbReference>
<dbReference type="GeneTree" id="ENSGT00950000182870"/>
<dbReference type="HOGENOM" id="CLU_029532_0_0_1"/>
<dbReference type="InParanoid" id="Q61120"/>
<dbReference type="PhylomeDB" id="Q61120"/>
<dbReference type="TreeFam" id="TF315807"/>
<dbReference type="Reactome" id="R-MMU-167044">
    <property type="pathway name" value="Signalling to RAS"/>
</dbReference>
<dbReference type="Reactome" id="R-MMU-5673001">
    <property type="pathway name" value="RAF/MAP kinase cascade"/>
</dbReference>
<dbReference type="Reactome" id="R-MMU-8853659">
    <property type="pathway name" value="RET signaling"/>
</dbReference>
<dbReference type="BioGRID-ORCS" id="20418">
    <property type="hits" value="3 hits in 62 CRISPR screens"/>
</dbReference>
<dbReference type="ChiTaRS" id="Shc3">
    <property type="organism name" value="mouse"/>
</dbReference>
<dbReference type="PRO" id="PR:Q61120"/>
<dbReference type="Proteomes" id="UP000000589">
    <property type="component" value="Chromosome 13"/>
</dbReference>
<dbReference type="RNAct" id="Q61120">
    <property type="molecule type" value="protein"/>
</dbReference>
<dbReference type="Bgee" id="ENSMUSG00000021448">
    <property type="expression patterns" value="Expressed in dentate gyrus of hippocampal formation granule cell and 75 other cell types or tissues"/>
</dbReference>
<dbReference type="ExpressionAtlas" id="Q61120">
    <property type="expression patterns" value="baseline and differential"/>
</dbReference>
<dbReference type="GO" id="GO:0045202">
    <property type="term" value="C:synapse"/>
    <property type="evidence" value="ECO:0007669"/>
    <property type="project" value="GOC"/>
</dbReference>
<dbReference type="GO" id="GO:0035556">
    <property type="term" value="P:intracellular signal transduction"/>
    <property type="evidence" value="ECO:0007669"/>
    <property type="project" value="InterPro"/>
</dbReference>
<dbReference type="GO" id="GO:0007611">
    <property type="term" value="P:learning or memory"/>
    <property type="evidence" value="ECO:0000315"/>
    <property type="project" value="MGI"/>
</dbReference>
<dbReference type="GO" id="GO:0035249">
    <property type="term" value="P:synaptic transmission, glutamatergic"/>
    <property type="evidence" value="ECO:0000315"/>
    <property type="project" value="MGI"/>
</dbReference>
<dbReference type="CDD" id="cd01209">
    <property type="entry name" value="PTB_Shc"/>
    <property type="match status" value="1"/>
</dbReference>
<dbReference type="CDD" id="cd09925">
    <property type="entry name" value="SH2_SHC"/>
    <property type="match status" value="1"/>
</dbReference>
<dbReference type="FunFam" id="2.30.29.30:FF:000036">
    <property type="entry name" value="SHC-transforming protein 1 isoform 3"/>
    <property type="match status" value="1"/>
</dbReference>
<dbReference type="FunFam" id="3.30.505.10:FF:000005">
    <property type="entry name" value="SHC-transforming protein 1 isoform 3"/>
    <property type="match status" value="1"/>
</dbReference>
<dbReference type="Gene3D" id="2.30.29.30">
    <property type="entry name" value="Pleckstrin-homology domain (PH domain)/Phosphotyrosine-binding domain (PTB)"/>
    <property type="match status" value="1"/>
</dbReference>
<dbReference type="Gene3D" id="3.30.505.10">
    <property type="entry name" value="SH2 domain"/>
    <property type="match status" value="1"/>
</dbReference>
<dbReference type="InterPro" id="IPR051235">
    <property type="entry name" value="CEP152/SHC-Transforming"/>
</dbReference>
<dbReference type="InterPro" id="IPR011993">
    <property type="entry name" value="PH-like_dom_sf"/>
</dbReference>
<dbReference type="InterPro" id="IPR006019">
    <property type="entry name" value="PID_Shc-like"/>
</dbReference>
<dbReference type="InterPro" id="IPR006020">
    <property type="entry name" value="PTB/PI_dom"/>
</dbReference>
<dbReference type="InterPro" id="IPR000980">
    <property type="entry name" value="SH2"/>
</dbReference>
<dbReference type="InterPro" id="IPR036860">
    <property type="entry name" value="SH2_dom_sf"/>
</dbReference>
<dbReference type="InterPro" id="IPR035676">
    <property type="entry name" value="SHC_SH2"/>
</dbReference>
<dbReference type="PANTHER" id="PTHR10337">
    <property type="entry name" value="SHC TRANSFORMING PROTEIN"/>
    <property type="match status" value="1"/>
</dbReference>
<dbReference type="PANTHER" id="PTHR10337:SF4">
    <property type="entry name" value="SHC-TRANSFORMING PROTEIN 3"/>
    <property type="match status" value="1"/>
</dbReference>
<dbReference type="Pfam" id="PF00640">
    <property type="entry name" value="PID"/>
    <property type="match status" value="1"/>
</dbReference>
<dbReference type="Pfam" id="PF00017">
    <property type="entry name" value="SH2"/>
    <property type="match status" value="1"/>
</dbReference>
<dbReference type="PRINTS" id="PR00401">
    <property type="entry name" value="SH2DOMAIN"/>
</dbReference>
<dbReference type="PRINTS" id="PR00629">
    <property type="entry name" value="SHCPIDOMAIN"/>
</dbReference>
<dbReference type="SMART" id="SM00462">
    <property type="entry name" value="PTB"/>
    <property type="match status" value="1"/>
</dbReference>
<dbReference type="SMART" id="SM00252">
    <property type="entry name" value="SH2"/>
    <property type="match status" value="1"/>
</dbReference>
<dbReference type="SUPFAM" id="SSF50729">
    <property type="entry name" value="PH domain-like"/>
    <property type="match status" value="1"/>
</dbReference>
<dbReference type="SUPFAM" id="SSF55550">
    <property type="entry name" value="SH2 domain"/>
    <property type="match status" value="1"/>
</dbReference>
<dbReference type="PROSITE" id="PS01179">
    <property type="entry name" value="PID"/>
    <property type="match status" value="1"/>
</dbReference>
<dbReference type="PROSITE" id="PS50001">
    <property type="entry name" value="SH2"/>
    <property type="match status" value="1"/>
</dbReference>
<name>SHC3_MOUSE</name>
<proteinExistence type="evidence at protein level"/>
<sequence>MSATRKSRAGDEPLPRPPRGAPHTSDQVLGPGVTYVVKYLGCIEVLRSMRSLDFSTRTQVTREAISRVCEAVPGAKGALKKRKPPSKMLSSILGKSNLQFAGMSISLTISTASLNLRTPDSKQIIANHHMRSISFASGGDPDTTDYVAYVAKDPVNRRACHILECCDGLAQDVIGSIGQAFELRFKQYLQCPSKVPALQDRMQSLDEPWTEEEGDGPDHPYYNSVPTKMPPPGGFLDARLKGRPHAPEAAQFAGKEQTYYQGRHLGDTFGEDWQRAPTRQGSLDIYSTAEGKTHMVPVGETPTYVNTQPVPPQVWPAATSSTESSPRKDLFDMKPFEDALRNQPLGPMLSKAASVECISPVTPRAPDARMLEELNAEPWYQGEMSRKEAEALLREDGDFLVRKSTTNPGSFVLTGMHNGQAKHLLLVDPEGTIRTKDRVFDSISHLINYHLESSLPIVSAGSELCLQQPVERKP</sequence>
<evidence type="ECO:0000250" key="1"/>
<evidence type="ECO:0000255" key="2">
    <source>
        <dbReference type="PROSITE-ProRule" id="PRU00148"/>
    </source>
</evidence>
<evidence type="ECO:0000255" key="3">
    <source>
        <dbReference type="PROSITE-ProRule" id="PRU00191"/>
    </source>
</evidence>
<evidence type="ECO:0000256" key="4">
    <source>
        <dbReference type="SAM" id="MobiDB-lite"/>
    </source>
</evidence>
<evidence type="ECO:0000305" key="5"/>
<evidence type="ECO:0007744" key="6">
    <source>
    </source>
</evidence>
<accession>Q61120</accession>
<accession>Q3ZAX2</accession>
<feature type="chain" id="PRO_0000097735" description="SHC-transforming protein 3">
    <location>
        <begin position="1"/>
        <end position="474"/>
    </location>
</feature>
<feature type="domain" description="PID" evidence="2">
    <location>
        <begin position="29"/>
        <end position="214"/>
    </location>
</feature>
<feature type="domain" description="SH2" evidence="3">
    <location>
        <begin position="379"/>
        <end position="470"/>
    </location>
</feature>
<feature type="region of interest" description="Disordered" evidence="4">
    <location>
        <begin position="1"/>
        <end position="27"/>
    </location>
</feature>
<feature type="region of interest" description="CH1">
    <location>
        <begin position="215"/>
        <end position="378"/>
    </location>
</feature>
<feature type="region of interest" description="Disordered" evidence="4">
    <location>
        <begin position="308"/>
        <end position="328"/>
    </location>
</feature>
<feature type="modified residue" description="Phosphoserine" evidence="6">
    <location>
        <position position="282"/>
    </location>
</feature>
<feature type="sequence conflict" description="In Ref. 1; AAC52508." evidence="5" ref="1">
    <original>A</original>
    <variation>R</variation>
    <location>
        <position position="71"/>
    </location>
</feature>
<protein>
    <recommendedName>
        <fullName>SHC-transforming protein 3</fullName>
    </recommendedName>
    <alternativeName>
        <fullName>Neuronal Shc</fullName>
        <shortName>N-Shc</shortName>
    </alternativeName>
    <alternativeName>
        <fullName>SHC-transforming protein C</fullName>
    </alternativeName>
    <alternativeName>
        <fullName>Src homology 2 domain-containing-transforming protein C3</fullName>
        <shortName>SH2 domain protein C3</shortName>
    </alternativeName>
</protein>
<keyword id="KW-0597">Phosphoprotein</keyword>
<keyword id="KW-1185">Reference proteome</keyword>
<keyword id="KW-0727">SH2 domain</keyword>
<comment type="function">
    <text evidence="1">Signaling adapter that couples activated growth factor receptors to signaling pathway in neurons. Involved in the signal transduction pathways of neurotrophin-activated Trk receptors in cortical neurons (By similarity).</text>
</comment>
<comment type="subunit">
    <text evidence="1">Interacts with the Trk receptors in a phosphotyrosine-dependent manner. Once activated, binds to GRB2. Interacts with activated EGF receptors (By similarity).</text>
</comment>
<comment type="interaction">
    <interactant intactId="EBI-79107">
        <id>Q61120</id>
    </interactant>
    <interactant intactId="EBI-78814">
        <id>P12023</id>
        <label>App</label>
    </interactant>
    <organismsDiffer>false</organismsDiffer>
    <experiments>2</experiments>
</comment>
<comment type="tissue specificity">
    <text>Predominantly expressed in the adult brain.</text>
</comment>
<comment type="PTM">
    <text evidence="1">Tyrosine phosphorylated.</text>
</comment>
<gene>
    <name type="primary">Shc3</name>
    <name type="synonym">Nshc</name>
    <name type="synonym">ShcC</name>
</gene>
<organism>
    <name type="scientific">Mus musculus</name>
    <name type="common">Mouse</name>
    <dbReference type="NCBI Taxonomy" id="10090"/>
    <lineage>
        <taxon>Eukaryota</taxon>
        <taxon>Metazoa</taxon>
        <taxon>Chordata</taxon>
        <taxon>Craniata</taxon>
        <taxon>Vertebrata</taxon>
        <taxon>Euteleostomi</taxon>
        <taxon>Mammalia</taxon>
        <taxon>Eutheria</taxon>
        <taxon>Euarchontoglires</taxon>
        <taxon>Glires</taxon>
        <taxon>Rodentia</taxon>
        <taxon>Myomorpha</taxon>
        <taxon>Muroidea</taxon>
        <taxon>Muridae</taxon>
        <taxon>Murinae</taxon>
        <taxon>Mus</taxon>
        <taxon>Mus</taxon>
    </lineage>
</organism>
<reference key="1">
    <citation type="journal article" date="1996" name="Proc. Natl. Acad. Sci. U.S.A.">
        <title>A mammalian adaptor protein with conserved Src homology 2 and phosphotyrosine-binding domains is related to Shc and is specifically expressed in the brain.</title>
        <authorList>
            <person name="O'Bryan J.P."/>
            <person name="Songyang Z."/>
            <person name="Cantley L."/>
            <person name="Der C.J."/>
            <person name="Pawson T."/>
        </authorList>
    </citation>
    <scope>NUCLEOTIDE SEQUENCE [MRNA]</scope>
</reference>
<reference key="2">
    <citation type="journal article" date="2004" name="Genome Res.">
        <title>The status, quality, and expansion of the NIH full-length cDNA project: the Mammalian Gene Collection (MGC).</title>
        <authorList>
            <consortium name="The MGC Project Team"/>
        </authorList>
    </citation>
    <scope>NUCLEOTIDE SEQUENCE [LARGE SCALE MRNA]</scope>
</reference>
<reference key="3">
    <citation type="journal article" date="2010" name="Cell">
        <title>A tissue-specific atlas of mouse protein phosphorylation and expression.</title>
        <authorList>
            <person name="Huttlin E.L."/>
            <person name="Jedrychowski M.P."/>
            <person name="Elias J.E."/>
            <person name="Goswami T."/>
            <person name="Rad R."/>
            <person name="Beausoleil S.A."/>
            <person name="Villen J."/>
            <person name="Haas W."/>
            <person name="Sowa M.E."/>
            <person name="Gygi S.P."/>
        </authorList>
    </citation>
    <scope>PHOSPHORYLATION [LARGE SCALE ANALYSIS] AT SER-282</scope>
    <scope>IDENTIFICATION BY MASS SPECTROMETRY [LARGE SCALE ANALYSIS]</scope>
    <source>
        <tissue>Brain</tissue>
    </source>
</reference>